<sequence>MNCPIFLWRIYKYIVHLFTGRSEIERICYNIELKSLDRLALIETSVDYSKQLVHIKKDMKSEFDPGDVAIKIVEIKGFNQELLAFDSIILPNLISALEPISLFQGLKKSIEKKQKIPYDNNNLEHEASLERLWEALLPDVRRSARLSKEWGTLGFQGMDPATDFRGMGILGLDNLIYFSTQHSEDAREILKNSNSKCCYPFAITGINITALVLNLIDKPHFKIYFFKNGSTLTQFNELYSLVFISFDRFYQSKKPKSIMEFNTIKKEFETKISQNSDLVQLLRN</sequence>
<gene>
    <name type="primary">elmoB</name>
    <name type="ORF">DDB_G0280179</name>
</gene>
<proteinExistence type="predicted"/>
<evidence type="ECO:0000255" key="1">
    <source>
        <dbReference type="PROSITE-ProRule" id="PRU00664"/>
    </source>
</evidence>
<accession>Q54VR8</accession>
<keyword id="KW-1185">Reference proteome</keyword>
<organism>
    <name type="scientific">Dictyostelium discoideum</name>
    <name type="common">Social amoeba</name>
    <dbReference type="NCBI Taxonomy" id="44689"/>
    <lineage>
        <taxon>Eukaryota</taxon>
        <taxon>Amoebozoa</taxon>
        <taxon>Evosea</taxon>
        <taxon>Eumycetozoa</taxon>
        <taxon>Dictyostelia</taxon>
        <taxon>Dictyosteliales</taxon>
        <taxon>Dictyosteliaceae</taxon>
        <taxon>Dictyostelium</taxon>
    </lineage>
</organism>
<dbReference type="EMBL" id="AAFI02000035">
    <property type="protein sequence ID" value="EAL67316.1"/>
    <property type="molecule type" value="Genomic_DNA"/>
</dbReference>
<dbReference type="RefSeq" id="XP_641287.1">
    <property type="nucleotide sequence ID" value="XM_636195.1"/>
</dbReference>
<dbReference type="SMR" id="Q54VR8"/>
<dbReference type="FunCoup" id="Q54VR8">
    <property type="interactions" value="210"/>
</dbReference>
<dbReference type="STRING" id="44689.Q54VR8"/>
<dbReference type="PaxDb" id="44689-DDB0233921"/>
<dbReference type="EnsemblProtists" id="EAL67316">
    <property type="protein sequence ID" value="EAL67316"/>
    <property type="gene ID" value="DDB_G0280179"/>
</dbReference>
<dbReference type="GeneID" id="8622419"/>
<dbReference type="KEGG" id="ddi:DDB_G0280179"/>
<dbReference type="dictyBase" id="DDB_G0280179">
    <property type="gene designation" value="elmoB"/>
</dbReference>
<dbReference type="VEuPathDB" id="AmoebaDB:DDB_G0280179"/>
<dbReference type="eggNOG" id="KOG2998">
    <property type="taxonomic scope" value="Eukaryota"/>
</dbReference>
<dbReference type="HOGENOM" id="CLU_056289_0_0_1"/>
<dbReference type="InParanoid" id="Q54VR8"/>
<dbReference type="OMA" id="WMKWILR"/>
<dbReference type="PhylomeDB" id="Q54VR8"/>
<dbReference type="PRO" id="PR:Q54VR8"/>
<dbReference type="Proteomes" id="UP000002195">
    <property type="component" value="Chromosome 3"/>
</dbReference>
<dbReference type="GO" id="GO:0005096">
    <property type="term" value="F:GTPase activator activity"/>
    <property type="evidence" value="ECO:0000318"/>
    <property type="project" value="GO_Central"/>
</dbReference>
<dbReference type="InterPro" id="IPR006816">
    <property type="entry name" value="ELMO_dom"/>
</dbReference>
<dbReference type="InterPro" id="IPR050868">
    <property type="entry name" value="ELMO_domain-containing"/>
</dbReference>
<dbReference type="PANTHER" id="PTHR12771">
    <property type="entry name" value="ENGULFMENT AND CELL MOTILITY"/>
    <property type="match status" value="1"/>
</dbReference>
<dbReference type="PANTHER" id="PTHR12771:SF51">
    <property type="entry name" value="LD01482P"/>
    <property type="match status" value="1"/>
</dbReference>
<dbReference type="Pfam" id="PF04727">
    <property type="entry name" value="ELMO_CED12"/>
    <property type="match status" value="1"/>
</dbReference>
<dbReference type="PROSITE" id="PS51335">
    <property type="entry name" value="ELMO"/>
    <property type="match status" value="1"/>
</dbReference>
<name>ELMOB_DICDI</name>
<reference key="1">
    <citation type="journal article" date="2005" name="Nature">
        <title>The genome of the social amoeba Dictyostelium discoideum.</title>
        <authorList>
            <person name="Eichinger L."/>
            <person name="Pachebat J.A."/>
            <person name="Gloeckner G."/>
            <person name="Rajandream M.A."/>
            <person name="Sucgang R."/>
            <person name="Berriman M."/>
            <person name="Song J."/>
            <person name="Olsen R."/>
            <person name="Szafranski K."/>
            <person name="Xu Q."/>
            <person name="Tunggal B."/>
            <person name="Kummerfeld S."/>
            <person name="Madera M."/>
            <person name="Konfortov B.A."/>
            <person name="Rivero F."/>
            <person name="Bankier A.T."/>
            <person name="Lehmann R."/>
            <person name="Hamlin N."/>
            <person name="Davies R."/>
            <person name="Gaudet P."/>
            <person name="Fey P."/>
            <person name="Pilcher K."/>
            <person name="Chen G."/>
            <person name="Saunders D."/>
            <person name="Sodergren E.J."/>
            <person name="Davis P."/>
            <person name="Kerhornou A."/>
            <person name="Nie X."/>
            <person name="Hall N."/>
            <person name="Anjard C."/>
            <person name="Hemphill L."/>
            <person name="Bason N."/>
            <person name="Farbrother P."/>
            <person name="Desany B."/>
            <person name="Just E."/>
            <person name="Morio T."/>
            <person name="Rost R."/>
            <person name="Churcher C.M."/>
            <person name="Cooper J."/>
            <person name="Haydock S."/>
            <person name="van Driessche N."/>
            <person name="Cronin A."/>
            <person name="Goodhead I."/>
            <person name="Muzny D.M."/>
            <person name="Mourier T."/>
            <person name="Pain A."/>
            <person name="Lu M."/>
            <person name="Harper D."/>
            <person name="Lindsay R."/>
            <person name="Hauser H."/>
            <person name="James K.D."/>
            <person name="Quiles M."/>
            <person name="Madan Babu M."/>
            <person name="Saito T."/>
            <person name="Buchrieser C."/>
            <person name="Wardroper A."/>
            <person name="Felder M."/>
            <person name="Thangavelu M."/>
            <person name="Johnson D."/>
            <person name="Knights A."/>
            <person name="Loulseged H."/>
            <person name="Mungall K.L."/>
            <person name="Oliver K."/>
            <person name="Price C."/>
            <person name="Quail M.A."/>
            <person name="Urushihara H."/>
            <person name="Hernandez J."/>
            <person name="Rabbinowitsch E."/>
            <person name="Steffen D."/>
            <person name="Sanders M."/>
            <person name="Ma J."/>
            <person name="Kohara Y."/>
            <person name="Sharp S."/>
            <person name="Simmonds M.N."/>
            <person name="Spiegler S."/>
            <person name="Tivey A."/>
            <person name="Sugano S."/>
            <person name="White B."/>
            <person name="Walker D."/>
            <person name="Woodward J.R."/>
            <person name="Winckler T."/>
            <person name="Tanaka Y."/>
            <person name="Shaulsky G."/>
            <person name="Schleicher M."/>
            <person name="Weinstock G.M."/>
            <person name="Rosenthal A."/>
            <person name="Cox E.C."/>
            <person name="Chisholm R.L."/>
            <person name="Gibbs R.A."/>
            <person name="Loomis W.F."/>
            <person name="Platzer M."/>
            <person name="Kay R.R."/>
            <person name="Williams J.G."/>
            <person name="Dear P.H."/>
            <person name="Noegel A.A."/>
            <person name="Barrell B.G."/>
            <person name="Kuspa A."/>
        </authorList>
    </citation>
    <scope>NUCLEOTIDE SEQUENCE [LARGE SCALE GENOMIC DNA]</scope>
    <source>
        <strain>AX4</strain>
    </source>
</reference>
<feature type="chain" id="PRO_0000333279" description="ELMO domain-containing protein B">
    <location>
        <begin position="1"/>
        <end position="284"/>
    </location>
</feature>
<feature type="domain" description="ELMO" evidence="1">
    <location>
        <begin position="124"/>
        <end position="276"/>
    </location>
</feature>
<protein>
    <recommendedName>
        <fullName>ELMO domain-containing protein B</fullName>
    </recommendedName>
</protein>